<reference key="1">
    <citation type="journal article" date="1991" name="J. Biol. Chem.">
        <title>Structural and functional conservation of synaptotagmin (p65) in Drosophila and humans.</title>
        <authorList>
            <person name="Perin M.S."/>
            <person name="Johnston P.A."/>
            <person name="Oezcelik T."/>
            <person name="Jahn R."/>
            <person name="Francke U."/>
            <person name="Suedhof T.C."/>
        </authorList>
    </citation>
    <scope>NUCLEOTIDE SEQUENCE [MRNA]</scope>
</reference>
<reference key="2">
    <citation type="journal article" date="2004" name="Nat. Genet.">
        <title>Complete sequencing and characterization of 21,243 full-length human cDNAs.</title>
        <authorList>
            <person name="Ota T."/>
            <person name="Suzuki Y."/>
            <person name="Nishikawa T."/>
            <person name="Otsuki T."/>
            <person name="Sugiyama T."/>
            <person name="Irie R."/>
            <person name="Wakamatsu A."/>
            <person name="Hayashi K."/>
            <person name="Sato H."/>
            <person name="Nagai K."/>
            <person name="Kimura K."/>
            <person name="Makita H."/>
            <person name="Sekine M."/>
            <person name="Obayashi M."/>
            <person name="Nishi T."/>
            <person name="Shibahara T."/>
            <person name="Tanaka T."/>
            <person name="Ishii S."/>
            <person name="Yamamoto J."/>
            <person name="Saito K."/>
            <person name="Kawai Y."/>
            <person name="Isono Y."/>
            <person name="Nakamura Y."/>
            <person name="Nagahari K."/>
            <person name="Murakami K."/>
            <person name="Yasuda T."/>
            <person name="Iwayanagi T."/>
            <person name="Wagatsuma M."/>
            <person name="Shiratori A."/>
            <person name="Sudo H."/>
            <person name="Hosoiri T."/>
            <person name="Kaku Y."/>
            <person name="Kodaira H."/>
            <person name="Kondo H."/>
            <person name="Sugawara M."/>
            <person name="Takahashi M."/>
            <person name="Kanda K."/>
            <person name="Yokoi T."/>
            <person name="Furuya T."/>
            <person name="Kikkawa E."/>
            <person name="Omura Y."/>
            <person name="Abe K."/>
            <person name="Kamihara K."/>
            <person name="Katsuta N."/>
            <person name="Sato K."/>
            <person name="Tanikawa M."/>
            <person name="Yamazaki M."/>
            <person name="Ninomiya K."/>
            <person name="Ishibashi T."/>
            <person name="Yamashita H."/>
            <person name="Murakawa K."/>
            <person name="Fujimori K."/>
            <person name="Tanai H."/>
            <person name="Kimata M."/>
            <person name="Watanabe M."/>
            <person name="Hiraoka S."/>
            <person name="Chiba Y."/>
            <person name="Ishida S."/>
            <person name="Ono Y."/>
            <person name="Takiguchi S."/>
            <person name="Watanabe S."/>
            <person name="Yosida M."/>
            <person name="Hotuta T."/>
            <person name="Kusano J."/>
            <person name="Kanehori K."/>
            <person name="Takahashi-Fujii A."/>
            <person name="Hara H."/>
            <person name="Tanase T.-O."/>
            <person name="Nomura Y."/>
            <person name="Togiya S."/>
            <person name="Komai F."/>
            <person name="Hara R."/>
            <person name="Takeuchi K."/>
            <person name="Arita M."/>
            <person name="Imose N."/>
            <person name="Musashino K."/>
            <person name="Yuuki H."/>
            <person name="Oshima A."/>
            <person name="Sasaki N."/>
            <person name="Aotsuka S."/>
            <person name="Yoshikawa Y."/>
            <person name="Matsunawa H."/>
            <person name="Ichihara T."/>
            <person name="Shiohata N."/>
            <person name="Sano S."/>
            <person name="Moriya S."/>
            <person name="Momiyama H."/>
            <person name="Satoh N."/>
            <person name="Takami S."/>
            <person name="Terashima Y."/>
            <person name="Suzuki O."/>
            <person name="Nakagawa S."/>
            <person name="Senoh A."/>
            <person name="Mizoguchi H."/>
            <person name="Goto Y."/>
            <person name="Shimizu F."/>
            <person name="Wakebe H."/>
            <person name="Hishigaki H."/>
            <person name="Watanabe T."/>
            <person name="Sugiyama A."/>
            <person name="Takemoto M."/>
            <person name="Kawakami B."/>
            <person name="Yamazaki M."/>
            <person name="Watanabe K."/>
            <person name="Kumagai A."/>
            <person name="Itakura S."/>
            <person name="Fukuzumi Y."/>
            <person name="Fujimori Y."/>
            <person name="Komiyama M."/>
            <person name="Tashiro H."/>
            <person name="Tanigami A."/>
            <person name="Fujiwara T."/>
            <person name="Ono T."/>
            <person name="Yamada K."/>
            <person name="Fujii Y."/>
            <person name="Ozaki K."/>
            <person name="Hirao M."/>
            <person name="Ohmori Y."/>
            <person name="Kawabata A."/>
            <person name="Hikiji T."/>
            <person name="Kobatake N."/>
            <person name="Inagaki H."/>
            <person name="Ikema Y."/>
            <person name="Okamoto S."/>
            <person name="Okitani R."/>
            <person name="Kawakami T."/>
            <person name="Noguchi S."/>
            <person name="Itoh T."/>
            <person name="Shigeta K."/>
            <person name="Senba T."/>
            <person name="Matsumura K."/>
            <person name="Nakajima Y."/>
            <person name="Mizuno T."/>
            <person name="Morinaga M."/>
            <person name="Sasaki M."/>
            <person name="Togashi T."/>
            <person name="Oyama M."/>
            <person name="Hata H."/>
            <person name="Watanabe M."/>
            <person name="Komatsu T."/>
            <person name="Mizushima-Sugano J."/>
            <person name="Satoh T."/>
            <person name="Shirai Y."/>
            <person name="Takahashi Y."/>
            <person name="Nakagawa K."/>
            <person name="Okumura K."/>
            <person name="Nagase T."/>
            <person name="Nomura N."/>
            <person name="Kikuchi H."/>
            <person name="Masuho Y."/>
            <person name="Yamashita R."/>
            <person name="Nakai K."/>
            <person name="Yada T."/>
            <person name="Nakamura Y."/>
            <person name="Ohara O."/>
            <person name="Isogai T."/>
            <person name="Sugano S."/>
        </authorList>
    </citation>
    <scope>NUCLEOTIDE SEQUENCE [LARGE SCALE MRNA]</scope>
    <source>
        <tissue>Amygdala</tissue>
        <tissue>Brain</tissue>
    </source>
</reference>
<reference key="3">
    <citation type="journal article" date="2007" name="BMC Genomics">
        <title>The full-ORF clone resource of the German cDNA consortium.</title>
        <authorList>
            <person name="Bechtel S."/>
            <person name="Rosenfelder H."/>
            <person name="Duda A."/>
            <person name="Schmidt C.P."/>
            <person name="Ernst U."/>
            <person name="Wellenreuther R."/>
            <person name="Mehrle A."/>
            <person name="Schuster C."/>
            <person name="Bahr A."/>
            <person name="Bloecker H."/>
            <person name="Heubner D."/>
            <person name="Hoerlein A."/>
            <person name="Michel G."/>
            <person name="Wedler H."/>
            <person name="Koehrer K."/>
            <person name="Ottenwaelder B."/>
            <person name="Poustka A."/>
            <person name="Wiemann S."/>
            <person name="Schupp I."/>
        </authorList>
    </citation>
    <scope>NUCLEOTIDE SEQUENCE [LARGE SCALE MRNA]</scope>
    <source>
        <tissue>Hippocampus</tissue>
    </source>
</reference>
<reference key="4">
    <citation type="submission" date="2005-07" db="EMBL/GenBank/DDBJ databases">
        <authorList>
            <person name="Mural R.J."/>
            <person name="Istrail S."/>
            <person name="Sutton G."/>
            <person name="Florea L."/>
            <person name="Halpern A.L."/>
            <person name="Mobarry C.M."/>
            <person name="Lippert R."/>
            <person name="Walenz B."/>
            <person name="Shatkay H."/>
            <person name="Dew I."/>
            <person name="Miller J.R."/>
            <person name="Flanigan M.J."/>
            <person name="Edwards N.J."/>
            <person name="Bolanos R."/>
            <person name="Fasulo D."/>
            <person name="Halldorsson B.V."/>
            <person name="Hannenhalli S."/>
            <person name="Turner R."/>
            <person name="Yooseph S."/>
            <person name="Lu F."/>
            <person name="Nusskern D.R."/>
            <person name="Shue B.C."/>
            <person name="Zheng X.H."/>
            <person name="Zhong F."/>
            <person name="Delcher A.L."/>
            <person name="Huson D.H."/>
            <person name="Kravitz S.A."/>
            <person name="Mouchard L."/>
            <person name="Reinert K."/>
            <person name="Remington K.A."/>
            <person name="Clark A.G."/>
            <person name="Waterman M.S."/>
            <person name="Eichler E.E."/>
            <person name="Adams M.D."/>
            <person name="Hunkapiller M.W."/>
            <person name="Myers E.W."/>
            <person name="Venter J.C."/>
        </authorList>
    </citation>
    <scope>NUCLEOTIDE SEQUENCE [LARGE SCALE GENOMIC DNA]</scope>
</reference>
<reference key="5">
    <citation type="journal article" date="2004" name="Genome Res.">
        <title>The status, quality, and expansion of the NIH full-length cDNA project: the Mammalian Gene Collection (MGC).</title>
        <authorList>
            <consortium name="The MGC Project Team"/>
        </authorList>
    </citation>
    <scope>NUCLEOTIDE SEQUENCE [LARGE SCALE MRNA]</scope>
    <source>
        <tissue>PNS</tissue>
    </source>
</reference>
<reference key="6">
    <citation type="journal article" date="2001" name="J. Cell Biol.">
        <title>Stonin 2: an adaptor-like protein that interacts with components of the endocytic machinery.</title>
        <authorList>
            <person name="Martina J.A."/>
            <person name="Bonangelino C.J."/>
            <person name="Aguilar R.C."/>
            <person name="Bonifacino J.S."/>
        </authorList>
    </citation>
    <scope>INTERACTION WITH STON2</scope>
</reference>
<reference key="7">
    <citation type="journal article" date="2009" name="J. Immunol.">
        <title>Human SCAMP5, a novel secretory carrier membrane protein, facilitates calcium-triggered cytokine secretion by interaction with SNARE machinery.</title>
        <authorList>
            <person name="Han C."/>
            <person name="Chen T."/>
            <person name="Yang M."/>
            <person name="Li N."/>
            <person name="Liu H."/>
            <person name="Cao X."/>
        </authorList>
    </citation>
    <scope>INTERACTION WITH SCAMP5</scope>
</reference>
<reference key="8">
    <citation type="journal article" date="2011" name="Sci. Signal.">
        <title>System-wide temporal characterization of the proteome and phosphoproteome of human embryonic stem cell differentiation.</title>
        <authorList>
            <person name="Rigbolt K.T."/>
            <person name="Prokhorova T.A."/>
            <person name="Akimov V."/>
            <person name="Henningsen J."/>
            <person name="Johansen P.T."/>
            <person name="Kratchmarova I."/>
            <person name="Kassem M."/>
            <person name="Mann M."/>
            <person name="Olsen J.V."/>
            <person name="Blagoev B."/>
        </authorList>
    </citation>
    <scope>PHOSPHORYLATION [LARGE SCALE ANALYSIS] AT THR-129</scope>
    <scope>IDENTIFICATION BY MASS SPECTROMETRY [LARGE SCALE ANALYSIS]</scope>
</reference>
<reference key="9">
    <citation type="journal article" date="2013" name="J. Dermatol. Sci.">
        <title>SYT14L, especially its C2 domain, is involved in regulating melanocyte differentiation.</title>
        <authorList>
            <person name="Yoo J.C."/>
            <person name="Lim T.Y."/>
            <person name="Park J.S."/>
            <person name="Hah Y.S."/>
            <person name="Park N."/>
            <person name="Hong S.G."/>
            <person name="Park J.Y."/>
            <person name="Yoon T.J."/>
        </authorList>
    </citation>
    <scope>FUNCTION</scope>
    <scope>TISSUE SPECIFICITY</scope>
</reference>
<reference key="10">
    <citation type="journal article" date="2015" name="Eur. J. Hum. Genet.">
        <title>Novel de novo heterozygous loss-of-function variants in MED13L and further delineation of the MED13L haploinsufficiency syndrome.</title>
        <authorList>
            <person name="Cafiero C."/>
            <person name="Marangi G."/>
            <person name="Orteschi D."/>
            <person name="Ali M."/>
            <person name="Asaro A."/>
            <person name="Ponzi E."/>
            <person name="Moncada A."/>
            <person name="Ricciardi S."/>
            <person name="Murdolo M."/>
            <person name="Mancano G."/>
            <person name="Contaldo I."/>
            <person name="Leuzzi V."/>
            <person name="Battaglia D."/>
            <person name="Mercuri E."/>
            <person name="Slavotinek A.M."/>
            <person name="Zollino M."/>
        </authorList>
    </citation>
    <scope>VARIANT BAGOS LYS-303</scope>
</reference>
<reference key="11">
    <citation type="journal article" date="2015" name="J. Clin. Invest.">
        <title>Identification of a human synaptotagmin-1 mutation that perturbs synaptic vesicle cycling.</title>
        <authorList>
            <person name="Baker K."/>
            <person name="Gordon S.L."/>
            <person name="Grozeva D."/>
            <person name="van Kogelenberg M."/>
            <person name="Roberts N.Y."/>
            <person name="Pike M."/>
            <person name="Blair E."/>
            <person name="Hurles M.E."/>
            <person name="Chong W.K."/>
            <person name="Baldeweg T."/>
            <person name="Kurian M.A."/>
            <person name="Boyd S.G."/>
            <person name="Cousin M.A."/>
            <person name="Raymond F.L."/>
        </authorList>
    </citation>
    <scope>INVOLVEMENT IN BAGOS</scope>
    <scope>VARIANT BAGOS THR-368</scope>
</reference>
<reference key="12">
    <citation type="journal article" date="2018" name="Brain">
        <title>SYT1-associated neurodevelopmental disorder: a case series.</title>
        <authorList>
            <consortium name="Broad Center for Mendelian Genomics"/>
            <person name="Baker K."/>
            <person name="Gordon S.L."/>
            <person name="Melland H."/>
            <person name="Bumbak F."/>
            <person name="Scott D.J."/>
            <person name="Jiang T.J."/>
            <person name="Owen D."/>
            <person name="Turner B.J."/>
            <person name="Boyd S.G."/>
            <person name="Rossi M."/>
            <person name="Al-Raqad M."/>
            <person name="Elpeleg O."/>
            <person name="Peck D."/>
            <person name="Mancini G.M.S."/>
            <person name="Wilke M."/>
            <person name="Zollino M."/>
            <person name="Marangi G."/>
            <person name="Weigand H."/>
            <person name="Borggraefe I."/>
            <person name="Haack T."/>
            <person name="Stark Z."/>
            <person name="Sadedin S."/>
            <person name="Tan T.Y."/>
            <person name="Jiang Y."/>
            <person name="Gibbs R.A."/>
            <person name="Ellingwood S."/>
            <person name="Amaral M."/>
            <person name="Kelley W."/>
            <person name="Kurian M.A."/>
            <person name="Cousin M.A."/>
            <person name="Raymond F.L."/>
        </authorList>
    </citation>
    <scope>INVOLVEMENT IN BAGOS</scope>
    <scope>VARIANTS BAGOS LYS-303; GLY-304; GLU-366; THR-368 AND LYS-371</scope>
    <scope>CHARACTERIZATION OF VARIANTS BAGOS LYS-303; GLY-304; GLU-366; THR-368 AND LYS-371</scope>
</reference>
<proteinExistence type="evidence at protein level"/>
<sequence length="422" mass="47573">MVSESHHEALAAPPVTTVATVLPSNATEPASPGEGKEDAFSKLKEKFMNELHKIPLPPWALIAIAIVAVLLVLTCCFCICKKCLFKKKNKKKGKEKGGKNAINMKDVKDLGKTMKDQALKDDDAETGLTDGEEKEEPKEEEKLGKLQYSLDYDFQNNQLLVGIIQAAELPALDMGGTSDPYVKVFLLPDKKKKFETKVHRKTLNPVFNEQFTFKVPYSELGGKTLVMAVYDFDRFSKHDIIGEFKVPMNTVDFGHVTEEWRDLQSAEKEEQEKLGDICFSLRYVPTAGKLTVVILEAKNLKKMDVGGLSDPYVKIHLMQNGKRLKKKKTTIKKNTLNPYYNESFSFEVPFEQIQKVQVVVTVLDYDKIGKNDAIGKVFVGYNSTGAELRHWSDMLANPRRPIAQWHTLQVEEEVDAMLAVKK</sequence>
<keyword id="KW-0002">3D-structure</keyword>
<keyword id="KW-0106">Calcium</keyword>
<keyword id="KW-0963">Cytoplasm</keyword>
<keyword id="KW-0968">Cytoplasmic vesicle</keyword>
<keyword id="KW-0221">Differentiation</keyword>
<keyword id="KW-0225">Disease variant</keyword>
<keyword id="KW-0325">Glycoprotein</keyword>
<keyword id="KW-0449">Lipoprotein</keyword>
<keyword id="KW-0472">Membrane</keyword>
<keyword id="KW-0479">Metal-binding</keyword>
<keyword id="KW-0564">Palmitate</keyword>
<keyword id="KW-0597">Phosphoprotein</keyword>
<keyword id="KW-1267">Proteomics identification</keyword>
<keyword id="KW-1185">Reference proteome</keyword>
<keyword id="KW-0677">Repeat</keyword>
<keyword id="KW-0770">Synapse</keyword>
<keyword id="KW-0812">Transmembrane</keyword>
<keyword id="KW-1133">Transmembrane helix</keyword>
<protein>
    <recommendedName>
        <fullName evidence="13">Synaptotagmin-1</fullName>
    </recommendedName>
    <alternativeName>
        <fullName evidence="1">Synaptotagmin I</fullName>
        <shortName>SytI</shortName>
    </alternativeName>
    <alternativeName>
        <fullName evidence="1">p65</fullName>
    </alternativeName>
</protein>
<name>SYT1_HUMAN</name>
<comment type="function">
    <text evidence="2 9">Calcium sensor that participates in triggering neurotransmitter release at the synapse (By similarity). May have a regulatory role in the membrane interactions during trafficking of synaptic vesicles at the active zone of the synapse (By similarity). It binds acidic phospholipids with a specificity that requires the presence of both an acidic head group and a diacyl backbone. A Ca(2+)-dependent interaction between synaptotagmin and putative receptors for activated protein kinase C has also been reported. It can bind to at least three additional proteins in a Ca(2+)-independent manner; these are neurexins, syntaxin and AP2. Plays a role in dendrite formation by melanocytes (PubMed:23999003).</text>
</comment>
<comment type="cofactor">
    <cofactor evidence="5">
        <name>Ca(2+)</name>
        <dbReference type="ChEBI" id="CHEBI:29108"/>
    </cofactor>
    <text evidence="1">Binds 3 Ca(2+) ions per subunit. The ions are bound to the C2 domains.</text>
</comment>
<comment type="subunit">
    <text evidence="1 2 3 7 8 14">Homotetramer (Probable). Heterodimer; heterodimerizes with SYT2 in presence of calcium (By similarity). Interacts with SCAMP5 (PubMed:19234194). Interacts with STON2 (PubMed:11381094). Forms a complex with SV2B, syntaxin 1 and SNAP25 (By similarity). Interacts with SV2A, SV2B and SV2C (By similarity). Interacts with RIMS1 (By similarity). Interacts with PRRT2 (By similarity). Interacts with DNAJC5 in a phosphorylation-dependent manner (By similarity). Interacts (via N-terminus) with RAB3A (By similarity). Interacts with SYT12 (By similarity). Interacts with calmodulin (By similarity). Interacts with DNM1 (via C-terminal proline-rich domain (PRD)); this interaction facilitates vesicle fission during clathrin-mediated endocytosis (CME) (By similarity).</text>
</comment>
<comment type="interaction">
    <interactant intactId="EBI-524909">
        <id>P21579</id>
    </interactant>
    <interactant intactId="EBI-752094">
        <id>Q12982</id>
        <label>BNIP2</label>
    </interactant>
    <organismsDiffer>false</organismsDiffer>
    <experiments>3</experiments>
</comment>
<comment type="interaction">
    <interactant intactId="EBI-524909">
        <id>P21579</id>
    </interactant>
    <interactant intactId="EBI-8648738">
        <id>Q8WVV5</id>
        <label>BTN2A2</label>
    </interactant>
    <organismsDiffer>false</organismsDiffer>
    <experiments>3</experiments>
</comment>
<comment type="interaction">
    <interactant intactId="EBI-524909">
        <id>P21579</id>
    </interactant>
    <interactant intactId="EBI-714855">
        <id>O00305-2</id>
        <label>CACNB4</label>
    </interactant>
    <organismsDiffer>false</organismsDiffer>
    <experiments>2</experiments>
</comment>
<comment type="interaction">
    <interactant intactId="EBI-524909">
        <id>P21579</id>
    </interactant>
    <interactant intactId="EBI-10267100">
        <id>Q8N6G5</id>
        <label>CSGALNACT2</label>
    </interactant>
    <organismsDiffer>false</organismsDiffer>
    <experiments>3</experiments>
</comment>
<comment type="interaction">
    <interactant intactId="EBI-524909">
        <id>P21579</id>
    </interactant>
    <interactant intactId="EBI-1058710">
        <id>O43169</id>
        <label>CYB5B</label>
    </interactant>
    <organismsDiffer>false</organismsDiffer>
    <experiments>3</experiments>
</comment>
<comment type="interaction">
    <interactant intactId="EBI-524909">
        <id>P21579</id>
    </interactant>
    <interactant intactId="EBI-6166686">
        <id>Q96F15</id>
        <label>GIMAP5</label>
    </interactant>
    <organismsDiffer>false</organismsDiffer>
    <experiments>3</experiments>
</comment>
<comment type="interaction">
    <interactant intactId="EBI-524909">
        <id>P21579</id>
    </interactant>
    <interactant intactId="EBI-712096">
        <id>P30519</id>
        <label>HMOX2</label>
    </interactant>
    <organismsDiffer>false</organismsDiffer>
    <experiments>3</experiments>
</comment>
<comment type="interaction">
    <interactant intactId="EBI-524909">
        <id>P21579</id>
    </interactant>
    <interactant intactId="EBI-81279">
        <id>Q9Y6K9</id>
        <label>IKBKG</label>
    </interactant>
    <organismsDiffer>false</organismsDiffer>
    <experiments>3</experiments>
</comment>
<comment type="interaction">
    <interactant intactId="EBI-524909">
        <id>P21579</id>
    </interactant>
    <interactant intactId="EBI-8449636">
        <id>P30301</id>
        <label>MIP</label>
    </interactant>
    <organismsDiffer>false</organismsDiffer>
    <experiments>3</experiments>
</comment>
<comment type="interaction">
    <interactant intactId="EBI-524909">
        <id>P21579</id>
    </interactant>
    <interactant intactId="EBI-3921185">
        <id>Q9H115</id>
        <label>NAPB</label>
    </interactant>
    <organismsDiffer>false</organismsDiffer>
    <experiments>3</experiments>
</comment>
<comment type="interaction">
    <interactant intactId="EBI-524909">
        <id>P21579</id>
    </interactant>
    <interactant intactId="EBI-8032987">
        <id>Q8N9I0</id>
        <label>SYT2</label>
    </interactant>
    <organismsDiffer>false</organismsDiffer>
    <experiments>4</experiments>
</comment>
<comment type="interaction">
    <interactant intactId="EBI-524909">
        <id>P21579</id>
    </interactant>
    <interactant intactId="EBI-2339195">
        <id>Q9P0S9</id>
        <label>TMEM14C</label>
    </interactant>
    <organismsDiffer>false</organismsDiffer>
    <experiments>3</experiments>
</comment>
<comment type="interaction">
    <interactant intactId="EBI-524909">
        <id>P21579</id>
    </interactant>
    <interactant intactId="EBI-11956809">
        <id>Q8TBM7</id>
        <label>TMEM254</label>
    </interactant>
    <organismsDiffer>false</organismsDiffer>
    <experiments>3</experiments>
</comment>
<comment type="interaction">
    <interactant intactId="EBI-524909">
        <id>P21579</id>
    </interactant>
    <interactant intactId="EBI-2852148">
        <id>Q9H2L4</id>
        <label>TMEM60</label>
    </interactant>
    <organismsDiffer>false</organismsDiffer>
    <experiments>3</experiments>
</comment>
<comment type="interaction">
    <interactant intactId="EBI-524909">
        <id>P21579</id>
    </interactant>
    <interactant intactId="EBI-13939599">
        <id>P16473</id>
        <label>TSHR</label>
    </interactant>
    <organismsDiffer>false</organismsDiffer>
    <experiments>2</experiments>
</comment>
<comment type="interaction">
    <interactant intactId="EBI-524909">
        <id>P21579</id>
    </interactant>
    <interactant intactId="EBI-2819725">
        <id>Q9Y5Z9</id>
        <label>UBIAD1</label>
    </interactant>
    <organismsDiffer>false</organismsDiffer>
    <experiments>3</experiments>
</comment>
<comment type="interaction">
    <interactant intactId="EBI-524909">
        <id>P21579</id>
    </interactant>
    <interactant intactId="EBI-718439">
        <id>O95159</id>
        <label>ZFPL1</label>
    </interactant>
    <organismsDiffer>false</organismsDiffer>
    <experiments>3</experiments>
</comment>
<comment type="subcellular location">
    <subcellularLocation>
        <location evidence="1">Cytoplasmic vesicle</location>
        <location evidence="1">Secretory vesicle membrane</location>
        <topology evidence="4">Single-pass membrane protein</topology>
    </subcellularLocation>
    <subcellularLocation>
        <location evidence="1">Cytoplasmic vesicle</location>
        <location evidence="1">Secretory vesicle</location>
        <location evidence="1">Synaptic vesicle membrane</location>
        <topology evidence="1">Single-pass membrane protein</topology>
    </subcellularLocation>
    <subcellularLocation>
        <location evidence="1">Cytoplasmic vesicle</location>
        <location evidence="1">Secretory vesicle</location>
        <location evidence="1">Chromaffin granule membrane</location>
        <topology evidence="1">Single-pass membrane protein</topology>
    </subcellularLocation>
    <subcellularLocation>
        <location evidence="1">Cytoplasm</location>
    </subcellularLocation>
</comment>
<comment type="tissue specificity">
    <text evidence="9">Expressed in melanocytes (PubMed:23999003).</text>
</comment>
<comment type="domain">
    <text evidence="1">The first C2 domain mediates Ca(2+)-dependent phospholipid binding.</text>
</comment>
<comment type="domain">
    <text evidence="1">The second C2 domain mediates interaction with SV2A and probably with STN2.</text>
</comment>
<comment type="PTM">
    <text evidence="1">Glycosylated.</text>
</comment>
<comment type="disease" evidence="10 11 12">
    <disease id="DI-05432">
        <name>Baker-Gordon syndrome</name>
        <acronym>BAGOS</acronym>
        <description>An autosomal dominant neurodevelopmental disorder characterized by infantile hypotonia, congenital ophthalmic abnormalities, involuntary and hyperkinetic movements, stereotypic behavior, poor or absent speech, EEG abnormalities, and global developmental delay varying in severity from moderate to profound. Behavioral characteristics include sleep disturbance and episodic agitation.</description>
        <dbReference type="MIM" id="618218"/>
    </disease>
    <text>The disease is caused by variants affecting the gene represented in this entry.</text>
</comment>
<comment type="similarity">
    <text evidence="14">Belongs to the synaptotagmin family.</text>
</comment>
<gene>
    <name evidence="15" type="primary">SYT1</name>
    <name type="synonym">SVP65</name>
    <name type="synonym">SYT</name>
</gene>
<accession>P21579</accession>
<accession>Q6AI31</accession>
<organism>
    <name type="scientific">Homo sapiens</name>
    <name type="common">Human</name>
    <dbReference type="NCBI Taxonomy" id="9606"/>
    <lineage>
        <taxon>Eukaryota</taxon>
        <taxon>Metazoa</taxon>
        <taxon>Chordata</taxon>
        <taxon>Craniata</taxon>
        <taxon>Vertebrata</taxon>
        <taxon>Euteleostomi</taxon>
        <taxon>Mammalia</taxon>
        <taxon>Eutheria</taxon>
        <taxon>Euarchontoglires</taxon>
        <taxon>Primates</taxon>
        <taxon>Haplorrhini</taxon>
        <taxon>Catarrhini</taxon>
        <taxon>Hominidae</taxon>
        <taxon>Homo</taxon>
    </lineage>
</organism>
<feature type="chain" id="PRO_0000183936" description="Synaptotagmin-1">
    <location>
        <begin position="1"/>
        <end position="422"/>
    </location>
</feature>
<feature type="topological domain" description="Vesicular" evidence="4">
    <location>
        <begin position="1"/>
        <end position="57"/>
    </location>
</feature>
<feature type="transmembrane region" description="Helical" evidence="4">
    <location>
        <begin position="58"/>
        <end position="80"/>
    </location>
</feature>
<feature type="topological domain" description="Cytoplasmic" evidence="4">
    <location>
        <begin position="81"/>
        <end position="422"/>
    </location>
</feature>
<feature type="domain" description="C2 1" evidence="5">
    <location>
        <begin position="142"/>
        <end position="261"/>
    </location>
</feature>
<feature type="domain" description="C2 2" evidence="5">
    <location>
        <begin position="273"/>
        <end position="406"/>
    </location>
</feature>
<feature type="region of interest" description="Disordered" evidence="6">
    <location>
        <begin position="113"/>
        <end position="142"/>
    </location>
</feature>
<feature type="region of interest" description="Phospholipid binding" evidence="14">
    <location>
        <begin position="136"/>
        <end position="382"/>
    </location>
</feature>
<feature type="compositionally biased region" description="Acidic residues" evidence="6">
    <location>
        <begin position="122"/>
        <end position="134"/>
    </location>
</feature>
<feature type="binding site" evidence="5">
    <location>
        <position position="172"/>
    </location>
    <ligand>
        <name>Ca(2+)</name>
        <dbReference type="ChEBI" id="CHEBI:29108"/>
        <label>2</label>
    </ligand>
</feature>
<feature type="binding site" evidence="5">
    <location>
        <position position="173"/>
    </location>
    <ligand>
        <name>Ca(2+)</name>
        <dbReference type="ChEBI" id="CHEBI:29108"/>
        <label>1</label>
    </ligand>
</feature>
<feature type="binding site" evidence="5">
    <location>
        <position position="173"/>
    </location>
    <ligand>
        <name>Ca(2+)</name>
        <dbReference type="ChEBI" id="CHEBI:29108"/>
        <label>2</label>
    </ligand>
</feature>
<feature type="binding site" evidence="5">
    <location>
        <position position="179"/>
    </location>
    <ligand>
        <name>Ca(2+)</name>
        <dbReference type="ChEBI" id="CHEBI:29108"/>
        <label>1</label>
    </ligand>
</feature>
<feature type="binding site" evidence="5">
    <location>
        <position position="231"/>
    </location>
    <ligand>
        <name>Ca(2+)</name>
        <dbReference type="ChEBI" id="CHEBI:29108"/>
        <label>1</label>
    </ligand>
</feature>
<feature type="binding site" evidence="5">
    <location>
        <position position="231"/>
    </location>
    <ligand>
        <name>Ca(2+)</name>
        <dbReference type="ChEBI" id="CHEBI:29108"/>
        <label>2</label>
    </ligand>
</feature>
<feature type="binding site" evidence="5">
    <location>
        <position position="232"/>
    </location>
    <ligand>
        <name>Ca(2+)</name>
        <dbReference type="ChEBI" id="CHEBI:29108"/>
        <label>1</label>
    </ligand>
</feature>
<feature type="binding site" evidence="5">
    <location>
        <position position="233"/>
    </location>
    <ligand>
        <name>Ca(2+)</name>
        <dbReference type="ChEBI" id="CHEBI:29108"/>
        <label>1</label>
    </ligand>
</feature>
<feature type="binding site" evidence="5">
    <location>
        <position position="233"/>
    </location>
    <ligand>
        <name>Ca(2+)</name>
        <dbReference type="ChEBI" id="CHEBI:29108"/>
        <label>2</label>
    </ligand>
</feature>
<feature type="binding site" evidence="5">
    <location>
        <position position="233"/>
    </location>
    <ligand>
        <name>Ca(2+)</name>
        <dbReference type="ChEBI" id="CHEBI:29108"/>
        <label>3</label>
    </ligand>
</feature>
<feature type="binding site" evidence="5">
    <location>
        <position position="236"/>
    </location>
    <ligand>
        <name>Ca(2+)</name>
        <dbReference type="ChEBI" id="CHEBI:29108"/>
        <label>3</label>
    </ligand>
</feature>
<feature type="binding site" evidence="5">
    <location>
        <position position="237"/>
    </location>
    <ligand>
        <name>Ca(2+)</name>
        <dbReference type="ChEBI" id="CHEBI:29108"/>
        <label>3</label>
    </ligand>
</feature>
<feature type="binding site" evidence="5">
    <location>
        <position position="239"/>
    </location>
    <ligand>
        <name>Ca(2+)</name>
        <dbReference type="ChEBI" id="CHEBI:29108"/>
        <label>2</label>
    </ligand>
</feature>
<feature type="binding site" evidence="5">
    <location>
        <position position="239"/>
    </location>
    <ligand>
        <name>Ca(2+)</name>
        <dbReference type="ChEBI" id="CHEBI:29108"/>
        <label>3</label>
    </ligand>
</feature>
<feature type="binding site" evidence="5">
    <location>
        <position position="304"/>
    </location>
    <ligand>
        <name>Ca(2+)</name>
        <dbReference type="ChEBI" id="CHEBI:29108"/>
        <label>4</label>
    </ligand>
</feature>
<feature type="binding site" evidence="5">
    <location>
        <position position="304"/>
    </location>
    <ligand>
        <name>Ca(2+)</name>
        <dbReference type="ChEBI" id="CHEBI:29108"/>
        <label>5</label>
    </ligand>
</feature>
<feature type="binding site" evidence="5">
    <location>
        <position position="310"/>
    </location>
    <ligand>
        <name>Ca(2+)</name>
        <dbReference type="ChEBI" id="CHEBI:29108"/>
        <label>4</label>
    </ligand>
</feature>
<feature type="binding site" evidence="5">
    <location>
        <position position="364"/>
    </location>
    <ligand>
        <name>Ca(2+)</name>
        <dbReference type="ChEBI" id="CHEBI:29108"/>
        <label>4</label>
    </ligand>
</feature>
<feature type="binding site" evidence="5">
    <location>
        <position position="364"/>
    </location>
    <ligand>
        <name>Ca(2+)</name>
        <dbReference type="ChEBI" id="CHEBI:29108"/>
        <label>5</label>
    </ligand>
</feature>
<feature type="binding site" evidence="5">
    <location>
        <position position="366"/>
    </location>
    <ligand>
        <name>Ca(2+)</name>
        <dbReference type="ChEBI" id="CHEBI:29108"/>
        <label>4</label>
    </ligand>
</feature>
<feature type="binding site" evidence="5">
    <location>
        <position position="366"/>
    </location>
    <ligand>
        <name>Ca(2+)</name>
        <dbReference type="ChEBI" id="CHEBI:29108"/>
        <label>5</label>
    </ligand>
</feature>
<feature type="binding site" evidence="5">
    <location>
        <position position="372"/>
    </location>
    <ligand>
        <name>Ca(2+)</name>
        <dbReference type="ChEBI" id="CHEBI:29108"/>
        <label>5</label>
    </ligand>
</feature>
<feature type="modified residue" description="Phosphothreonine" evidence="16">
    <location>
        <position position="129"/>
    </location>
</feature>
<feature type="modified residue" description="Phosphotyrosine" evidence="2">
    <location>
        <position position="230"/>
    </location>
</feature>
<feature type="modified residue" description="Phosphoserine" evidence="2">
    <location>
        <position position="265"/>
    </location>
</feature>
<feature type="modified residue" description="Phosphoserine" evidence="1">
    <location>
        <position position="343"/>
    </location>
</feature>
<feature type="modified residue" description="Phosphoserine" evidence="1">
    <location>
        <position position="345"/>
    </location>
</feature>
<feature type="lipid moiety-binding region" description="S-palmitoyl cysteine" evidence="1">
    <location>
        <position position="75"/>
    </location>
</feature>
<feature type="lipid moiety-binding region" description="S-palmitoyl cysteine" evidence="1">
    <location>
        <position position="76"/>
    </location>
</feature>
<feature type="lipid moiety-binding region" description="S-palmitoyl cysteine" evidence="1">
    <location>
        <position position="78"/>
    </location>
</feature>
<feature type="lipid moiety-binding region" description="S-palmitoyl cysteine" evidence="1">
    <location>
        <position position="80"/>
    </location>
</feature>
<feature type="lipid moiety-binding region" description="S-palmitoyl cysteine" evidence="1">
    <location>
        <position position="83"/>
    </location>
</feature>
<feature type="glycosylation site" description="N-linked (GlcNAc...) asparagine" evidence="4">
    <location>
        <position position="25"/>
    </location>
</feature>
<feature type="sequence variant" id="VAR_081536" description="In BAGOS." evidence="11 12">
    <original>M</original>
    <variation>K</variation>
    <location>
        <position position="303"/>
    </location>
</feature>
<feature type="sequence variant" id="VAR_081537" description="In BAGOS." evidence="12">
    <original>D</original>
    <variation>G</variation>
    <location>
        <position position="304"/>
    </location>
</feature>
<feature type="sequence variant" id="VAR_081538" description="In BAGOS." evidence="12">
    <original>D</original>
    <variation>E</variation>
    <location>
        <position position="366"/>
    </location>
</feature>
<feature type="sequence variant" id="VAR_072911" description="In BAGOS; dbSNP:rs1135402761." evidence="10 12">
    <original>I</original>
    <variation>T</variation>
    <location>
        <position position="368"/>
    </location>
</feature>
<feature type="sequence variant" id="VAR_081539" description="In BAGOS." evidence="12">
    <original>N</original>
    <variation>K</variation>
    <location>
        <position position="371"/>
    </location>
</feature>
<feature type="helix" evidence="19">
    <location>
        <begin position="39"/>
        <end position="51"/>
    </location>
</feature>
<feature type="strand" evidence="18">
    <location>
        <begin position="145"/>
        <end position="153"/>
    </location>
</feature>
<feature type="turn" evidence="18">
    <location>
        <begin position="154"/>
        <end position="157"/>
    </location>
</feature>
<feature type="strand" evidence="18">
    <location>
        <begin position="158"/>
        <end position="167"/>
    </location>
</feature>
<feature type="helix" evidence="18">
    <location>
        <begin position="173"/>
        <end position="175"/>
    </location>
</feature>
<feature type="strand" evidence="18">
    <location>
        <begin position="180"/>
        <end position="188"/>
    </location>
</feature>
<feature type="strand" evidence="22">
    <location>
        <begin position="191"/>
        <end position="195"/>
    </location>
</feature>
<feature type="strand" evidence="18">
    <location>
        <begin position="206"/>
        <end position="213"/>
    </location>
</feature>
<feature type="helix" evidence="18">
    <location>
        <begin position="217"/>
        <end position="220"/>
    </location>
</feature>
<feature type="strand" evidence="18">
    <location>
        <begin position="224"/>
        <end position="231"/>
    </location>
</feature>
<feature type="strand" evidence="18">
    <location>
        <begin position="234"/>
        <end position="236"/>
    </location>
</feature>
<feature type="strand" evidence="18">
    <location>
        <begin position="239"/>
        <end position="247"/>
    </location>
</feature>
<feature type="helix" evidence="18">
    <location>
        <begin position="248"/>
        <end position="250"/>
    </location>
</feature>
<feature type="strand" evidence="18">
    <location>
        <begin position="257"/>
        <end position="262"/>
    </location>
</feature>
<feature type="strand" evidence="20">
    <location>
        <begin position="276"/>
        <end position="284"/>
    </location>
</feature>
<feature type="turn" evidence="20">
    <location>
        <begin position="285"/>
        <end position="288"/>
    </location>
</feature>
<feature type="strand" evidence="20">
    <location>
        <begin position="289"/>
        <end position="299"/>
    </location>
</feature>
<feature type="strand" evidence="21">
    <location>
        <begin position="304"/>
        <end position="307"/>
    </location>
</feature>
<feature type="strand" evidence="20">
    <location>
        <begin position="311"/>
        <end position="319"/>
    </location>
</feature>
<feature type="strand" evidence="20">
    <location>
        <begin position="322"/>
        <end position="328"/>
    </location>
</feature>
<feature type="strand" evidence="17">
    <location>
        <begin position="333"/>
        <end position="337"/>
    </location>
</feature>
<feature type="strand" evidence="20">
    <location>
        <begin position="339"/>
        <end position="347"/>
    </location>
</feature>
<feature type="turn" evidence="20">
    <location>
        <begin position="350"/>
        <end position="352"/>
    </location>
</feature>
<feature type="helix" evidence="20">
    <location>
        <begin position="353"/>
        <end position="355"/>
    </location>
</feature>
<feature type="strand" evidence="20">
    <location>
        <begin position="357"/>
        <end position="364"/>
    </location>
</feature>
<feature type="strand" evidence="20">
    <location>
        <begin position="367"/>
        <end position="369"/>
    </location>
</feature>
<feature type="strand" evidence="20">
    <location>
        <begin position="372"/>
        <end position="380"/>
    </location>
</feature>
<feature type="helix" evidence="20">
    <location>
        <begin position="385"/>
        <end position="396"/>
    </location>
</feature>
<feature type="strand" evidence="20">
    <location>
        <begin position="402"/>
        <end position="407"/>
    </location>
</feature>
<feature type="helix" evidence="20">
    <location>
        <begin position="411"/>
        <end position="418"/>
    </location>
</feature>
<dbReference type="EMBL" id="M55047">
    <property type="protein sequence ID" value="AAA60609.1"/>
    <property type="molecule type" value="mRNA"/>
</dbReference>
<dbReference type="EMBL" id="AK094616">
    <property type="protein sequence ID" value="BAG52897.1"/>
    <property type="molecule type" value="mRNA"/>
</dbReference>
<dbReference type="EMBL" id="AK126908">
    <property type="protein sequence ID" value="BAG54392.1"/>
    <property type="molecule type" value="mRNA"/>
</dbReference>
<dbReference type="EMBL" id="CR627387">
    <property type="protein sequence ID" value="CAH10483.1"/>
    <property type="molecule type" value="mRNA"/>
</dbReference>
<dbReference type="EMBL" id="CH471054">
    <property type="protein sequence ID" value="EAW97343.1"/>
    <property type="molecule type" value="Genomic_DNA"/>
</dbReference>
<dbReference type="EMBL" id="BC058917">
    <property type="protein sequence ID" value="AAH58917.1"/>
    <property type="molecule type" value="mRNA"/>
</dbReference>
<dbReference type="CCDS" id="CCDS9017.1"/>
<dbReference type="PIR" id="A39052">
    <property type="entry name" value="BMHU1Y"/>
</dbReference>
<dbReference type="RefSeq" id="NP_001129277.1">
    <property type="nucleotide sequence ID" value="NM_001135805.2"/>
</dbReference>
<dbReference type="RefSeq" id="NP_001129278.1">
    <property type="nucleotide sequence ID" value="NM_001135806.2"/>
</dbReference>
<dbReference type="RefSeq" id="NP_001402867.1">
    <property type="nucleotide sequence ID" value="NM_001415938.1"/>
</dbReference>
<dbReference type="RefSeq" id="NP_001402868.1">
    <property type="nucleotide sequence ID" value="NM_001415939.1"/>
</dbReference>
<dbReference type="RefSeq" id="NP_001402869.1">
    <property type="nucleotide sequence ID" value="NM_001415940.1"/>
</dbReference>
<dbReference type="RefSeq" id="NP_005630.1">
    <property type="nucleotide sequence ID" value="NM_005639.3"/>
</dbReference>
<dbReference type="RefSeq" id="XP_011537012.1">
    <property type="nucleotide sequence ID" value="XM_011538710.1"/>
</dbReference>
<dbReference type="RefSeq" id="XP_016875398.1">
    <property type="nucleotide sequence ID" value="XM_017019909.1"/>
</dbReference>
<dbReference type="RefSeq" id="XP_047285435.1">
    <property type="nucleotide sequence ID" value="XM_047429479.1"/>
</dbReference>
<dbReference type="RefSeq" id="XP_047285436.1">
    <property type="nucleotide sequence ID" value="XM_047429480.1"/>
</dbReference>
<dbReference type="RefSeq" id="XP_047285437.1">
    <property type="nucleotide sequence ID" value="XM_047429481.1"/>
</dbReference>
<dbReference type="RefSeq" id="XP_047285438.1">
    <property type="nucleotide sequence ID" value="XM_047429482.1"/>
</dbReference>
<dbReference type="RefSeq" id="XP_047285439.1">
    <property type="nucleotide sequence ID" value="XM_047429483.1"/>
</dbReference>
<dbReference type="RefSeq" id="XP_054229073.1">
    <property type="nucleotide sequence ID" value="XM_054373098.1"/>
</dbReference>
<dbReference type="RefSeq" id="XP_054229074.1">
    <property type="nucleotide sequence ID" value="XM_054373099.1"/>
</dbReference>
<dbReference type="RefSeq" id="XP_054229075.1">
    <property type="nucleotide sequence ID" value="XM_054373100.1"/>
</dbReference>
<dbReference type="PDB" id="2K45">
    <property type="method" value="NMR"/>
    <property type="chains" value="A=141-268"/>
</dbReference>
<dbReference type="PDB" id="2K4A">
    <property type="method" value="NMR"/>
    <property type="chains" value="A=141-268"/>
</dbReference>
<dbReference type="PDB" id="2K8M">
    <property type="method" value="NMR"/>
    <property type="chains" value="A/D=141-268"/>
</dbReference>
<dbReference type="PDB" id="2KI6">
    <property type="method" value="NMR"/>
    <property type="chains" value="A/F=141-268"/>
</dbReference>
<dbReference type="PDB" id="2LHA">
    <property type="method" value="NMR"/>
    <property type="chains" value="A=271-422"/>
</dbReference>
<dbReference type="PDB" id="2N1T">
    <property type="method" value="NMR"/>
    <property type="chains" value="E=272-419"/>
</dbReference>
<dbReference type="PDB" id="2R83">
    <property type="method" value="X-ray"/>
    <property type="resolution" value="2.70 A"/>
    <property type="chains" value="A/B=141-422"/>
</dbReference>
<dbReference type="PDB" id="3F00">
    <property type="method" value="X-ray"/>
    <property type="resolution" value="1.36 A"/>
    <property type="chains" value="A=141-266"/>
</dbReference>
<dbReference type="PDB" id="3F01">
    <property type="method" value="X-ray"/>
    <property type="resolution" value="1.70 A"/>
    <property type="chains" value="A=141-266"/>
</dbReference>
<dbReference type="PDB" id="3F04">
    <property type="method" value="X-ray"/>
    <property type="resolution" value="1.35 A"/>
    <property type="chains" value="A=141-266"/>
</dbReference>
<dbReference type="PDB" id="3F05">
    <property type="method" value="X-ray"/>
    <property type="resolution" value="1.40 A"/>
    <property type="chains" value="A=141-266"/>
</dbReference>
<dbReference type="PDB" id="4ISQ">
    <property type="method" value="X-ray"/>
    <property type="resolution" value="2.65 A"/>
    <property type="chains" value="D/E/F=33-53"/>
</dbReference>
<dbReference type="PDB" id="4V11">
    <property type="method" value="X-ray"/>
    <property type="resolution" value="1.95 A"/>
    <property type="chains" value="A=273-422"/>
</dbReference>
<dbReference type="PDB" id="6G5F">
    <property type="method" value="X-ray"/>
    <property type="resolution" value="2.50 A"/>
    <property type="chains" value="P=33-53"/>
</dbReference>
<dbReference type="PDB" id="6G5K">
    <property type="method" value="X-ray"/>
    <property type="resolution" value="2.00 A"/>
    <property type="chains" value="C/D=33-53"/>
</dbReference>
<dbReference type="PDB" id="6QNS">
    <property type="method" value="X-ray"/>
    <property type="resolution" value="2.40 A"/>
    <property type="chains" value="S=33-53"/>
</dbReference>
<dbReference type="PDB" id="6TZ3">
    <property type="method" value="X-ray"/>
    <property type="resolution" value="1.17 A"/>
    <property type="chains" value="A=272-422"/>
</dbReference>
<dbReference type="PDB" id="6U41">
    <property type="method" value="X-ray"/>
    <property type="resolution" value="1.70 A"/>
    <property type="chains" value="A=272-422"/>
</dbReference>
<dbReference type="PDB" id="6U4U">
    <property type="method" value="X-ray"/>
    <property type="resolution" value="1.30 A"/>
    <property type="chains" value="A=272-422"/>
</dbReference>
<dbReference type="PDB" id="6U4W">
    <property type="method" value="X-ray"/>
    <property type="resolution" value="1.40 A"/>
    <property type="chains" value="A=272-422"/>
</dbReference>
<dbReference type="PDB" id="6ZVN">
    <property type="method" value="X-ray"/>
    <property type="resolution" value="2.50 A"/>
    <property type="chains" value="BBB=33-53"/>
</dbReference>
<dbReference type="PDB" id="7TUA">
    <property type="method" value="X-ray"/>
    <property type="resolution" value="1.35 A"/>
    <property type="chains" value="A=272-422"/>
</dbReference>
<dbReference type="PDB" id="7U4Q">
    <property type="method" value="X-ray"/>
    <property type="resolution" value="1.56 A"/>
    <property type="chains" value="A/B=141-267"/>
</dbReference>
<dbReference type="PDB" id="8B8I">
    <property type="method" value="X-ray"/>
    <property type="resolution" value="2.75 A"/>
    <property type="chains" value="I/J/K/L/M/N/O/P=1-60"/>
</dbReference>
<dbReference type="PDBsum" id="2K45"/>
<dbReference type="PDBsum" id="2K4A"/>
<dbReference type="PDBsum" id="2K8M"/>
<dbReference type="PDBsum" id="2KI6"/>
<dbReference type="PDBsum" id="2LHA"/>
<dbReference type="PDBsum" id="2N1T"/>
<dbReference type="PDBsum" id="2R83"/>
<dbReference type="PDBsum" id="3F00"/>
<dbReference type="PDBsum" id="3F01"/>
<dbReference type="PDBsum" id="3F04"/>
<dbReference type="PDBsum" id="3F05"/>
<dbReference type="PDBsum" id="4ISQ"/>
<dbReference type="PDBsum" id="4V11"/>
<dbReference type="PDBsum" id="6G5F"/>
<dbReference type="PDBsum" id="6G5K"/>
<dbReference type="PDBsum" id="6QNS"/>
<dbReference type="PDBsum" id="6TZ3"/>
<dbReference type="PDBsum" id="6U41"/>
<dbReference type="PDBsum" id="6U4U"/>
<dbReference type="PDBsum" id="6U4W"/>
<dbReference type="PDBsum" id="6ZVN"/>
<dbReference type="PDBsum" id="7TUA"/>
<dbReference type="PDBsum" id="7U4Q"/>
<dbReference type="PDBsum" id="8B8I"/>
<dbReference type="SMR" id="P21579"/>
<dbReference type="BioGRID" id="112723">
    <property type="interactions" value="79"/>
</dbReference>
<dbReference type="DIP" id="DIP-34042N"/>
<dbReference type="ELM" id="P21579"/>
<dbReference type="FunCoup" id="P21579">
    <property type="interactions" value="1374"/>
</dbReference>
<dbReference type="IntAct" id="P21579">
    <property type="interactions" value="69"/>
</dbReference>
<dbReference type="MINT" id="P21579"/>
<dbReference type="STRING" id="9606.ENSP00000261205"/>
<dbReference type="TCDB" id="1.F.1.1.1">
    <property type="family name" value="the synaptosomal vesicle fusion pore (svf-pore) family"/>
</dbReference>
<dbReference type="GlyCosmos" id="P21579">
    <property type="glycosylation" value="1 site, No reported glycans"/>
</dbReference>
<dbReference type="GlyGen" id="P21579">
    <property type="glycosylation" value="2 sites, 1 N-linked glycan (1 site)"/>
</dbReference>
<dbReference type="iPTMnet" id="P21579"/>
<dbReference type="PhosphoSitePlus" id="P21579"/>
<dbReference type="SwissPalm" id="P21579"/>
<dbReference type="BioMuta" id="SYT1"/>
<dbReference type="DMDM" id="135086"/>
<dbReference type="jPOST" id="P21579"/>
<dbReference type="MassIVE" id="P21579"/>
<dbReference type="PaxDb" id="9606-ENSP00000261205"/>
<dbReference type="PeptideAtlas" id="P21579"/>
<dbReference type="ProteomicsDB" id="53878"/>
<dbReference type="Pumba" id="P21579"/>
<dbReference type="Antibodypedia" id="1609">
    <property type="antibodies" value="843 antibodies from 43 providers"/>
</dbReference>
<dbReference type="DNASU" id="6857"/>
<dbReference type="YCharOS" id="P21579">
    <property type="antibodies" value="Tested 19 antibodies from 11 manufacturers"/>
</dbReference>
<dbReference type="Ensembl" id="ENST00000261205.9">
    <property type="protein sequence ID" value="ENSP00000261205.4"/>
    <property type="gene ID" value="ENSG00000067715.15"/>
</dbReference>
<dbReference type="Ensembl" id="ENST00000393240.7">
    <property type="protein sequence ID" value="ENSP00000376932.3"/>
    <property type="gene ID" value="ENSG00000067715.15"/>
</dbReference>
<dbReference type="Ensembl" id="ENST00000552744.5">
    <property type="protein sequence ID" value="ENSP00000447575.1"/>
    <property type="gene ID" value="ENSG00000067715.15"/>
</dbReference>
<dbReference type="Ensembl" id="ENST00000704696.1">
    <property type="protein sequence ID" value="ENSP00000515993.1"/>
    <property type="gene ID" value="ENSG00000067715.15"/>
</dbReference>
<dbReference type="Ensembl" id="ENST00000704700.1">
    <property type="protein sequence ID" value="ENSP00000515997.1"/>
    <property type="gene ID" value="ENSG00000067715.15"/>
</dbReference>
<dbReference type="Ensembl" id="ENST00000704702.1">
    <property type="protein sequence ID" value="ENSP00000515999.1"/>
    <property type="gene ID" value="ENSG00000067715.15"/>
</dbReference>
<dbReference type="Ensembl" id="ENST00000704704.1">
    <property type="protein sequence ID" value="ENSP00000516001.1"/>
    <property type="gene ID" value="ENSG00000067715.15"/>
</dbReference>
<dbReference type="Ensembl" id="ENST00000704705.1">
    <property type="protein sequence ID" value="ENSP00000516002.1"/>
    <property type="gene ID" value="ENSG00000067715.15"/>
</dbReference>
<dbReference type="Ensembl" id="ENST00000704706.1">
    <property type="protein sequence ID" value="ENSP00000516003.1"/>
    <property type="gene ID" value="ENSG00000067715.15"/>
</dbReference>
<dbReference type="Ensembl" id="ENST00000704708.1">
    <property type="protein sequence ID" value="ENSP00000516005.1"/>
    <property type="gene ID" value="ENSG00000067715.15"/>
</dbReference>
<dbReference type="Ensembl" id="ENST00000704710.1">
    <property type="protein sequence ID" value="ENSP00000516007.1"/>
    <property type="gene ID" value="ENSG00000067715.15"/>
</dbReference>
<dbReference type="Ensembl" id="ENST00000704714.1">
    <property type="protein sequence ID" value="ENSP00000516009.1"/>
    <property type="gene ID" value="ENSG00000067715.15"/>
</dbReference>
<dbReference type="Ensembl" id="ENST00000704718.1">
    <property type="protein sequence ID" value="ENSP00000516013.1"/>
    <property type="gene ID" value="ENSG00000067715.15"/>
</dbReference>
<dbReference type="GeneID" id="6857"/>
<dbReference type="KEGG" id="hsa:6857"/>
<dbReference type="MANE-Select" id="ENST00000261205.9">
    <property type="protein sequence ID" value="ENSP00000261205.4"/>
    <property type="RefSeq nucleotide sequence ID" value="NM_005639.3"/>
    <property type="RefSeq protein sequence ID" value="NP_005630.1"/>
</dbReference>
<dbReference type="UCSC" id="uc001sys.4">
    <property type="organism name" value="human"/>
</dbReference>
<dbReference type="AGR" id="HGNC:11509"/>
<dbReference type="CTD" id="6857"/>
<dbReference type="DisGeNET" id="6857"/>
<dbReference type="GeneCards" id="SYT1"/>
<dbReference type="HGNC" id="HGNC:11509">
    <property type="gene designation" value="SYT1"/>
</dbReference>
<dbReference type="HPA" id="ENSG00000067715">
    <property type="expression patterns" value="Group enriched (brain, retina)"/>
</dbReference>
<dbReference type="MalaCards" id="SYT1"/>
<dbReference type="MIM" id="185605">
    <property type="type" value="gene"/>
</dbReference>
<dbReference type="MIM" id="618218">
    <property type="type" value="phenotype"/>
</dbReference>
<dbReference type="neXtProt" id="NX_P21579"/>
<dbReference type="OpenTargets" id="ENSG00000067715"/>
<dbReference type="Orphanet" id="522077">
    <property type="disease" value="Infantile hypotonia-oculomotor anomalies-hyperkinetic movements-developmental delay syndrome"/>
</dbReference>
<dbReference type="PharmGKB" id="PA36290"/>
<dbReference type="VEuPathDB" id="HostDB:ENSG00000067715"/>
<dbReference type="eggNOG" id="KOG1028">
    <property type="taxonomic scope" value="Eukaryota"/>
</dbReference>
<dbReference type="GeneTree" id="ENSGT00940000155394"/>
<dbReference type="InParanoid" id="P21579"/>
<dbReference type="OMA" id="EYDFNTQ"/>
<dbReference type="OrthoDB" id="67700at2759"/>
<dbReference type="PAN-GO" id="P21579">
    <property type="GO annotations" value="15 GO annotations based on evolutionary models"/>
</dbReference>
<dbReference type="PhylomeDB" id="P21579"/>
<dbReference type="TreeFam" id="TF315600"/>
<dbReference type="PathwayCommons" id="P21579"/>
<dbReference type="Reactome" id="R-HSA-181429">
    <property type="pathway name" value="Serotonin Neurotransmitter Release Cycle"/>
</dbReference>
<dbReference type="Reactome" id="R-HSA-181430">
    <property type="pathway name" value="Norepinephrine Neurotransmitter Release Cycle"/>
</dbReference>
<dbReference type="Reactome" id="R-HSA-210500">
    <property type="pathway name" value="Glutamate Neurotransmitter Release Cycle"/>
</dbReference>
<dbReference type="Reactome" id="R-HSA-212676">
    <property type="pathway name" value="Dopamine Neurotransmitter Release Cycle"/>
</dbReference>
<dbReference type="Reactome" id="R-HSA-264642">
    <property type="pathway name" value="Acetylcholine Neurotransmitter Release Cycle"/>
</dbReference>
<dbReference type="Reactome" id="R-HSA-5250958">
    <property type="pathway name" value="Toxicity of botulinum toxin type B (botB)"/>
</dbReference>
<dbReference type="Reactome" id="R-HSA-5250989">
    <property type="pathway name" value="Toxicity of botulinum toxin type G (botG)"/>
</dbReference>
<dbReference type="Reactome" id="R-HSA-6794361">
    <property type="pathway name" value="Neurexins and neuroligins"/>
</dbReference>
<dbReference type="Reactome" id="R-HSA-8856825">
    <property type="pathway name" value="Cargo recognition for clathrin-mediated endocytosis"/>
</dbReference>
<dbReference type="Reactome" id="R-HSA-8856828">
    <property type="pathway name" value="Clathrin-mediated endocytosis"/>
</dbReference>
<dbReference type="Reactome" id="R-HSA-888590">
    <property type="pathway name" value="GABA synthesis, release, reuptake and degradation"/>
</dbReference>
<dbReference type="SignaLink" id="P21579"/>
<dbReference type="SIGNOR" id="P21579"/>
<dbReference type="BioGRID-ORCS" id="6857">
    <property type="hits" value="160 hits in 1147 CRISPR screens"/>
</dbReference>
<dbReference type="CD-CODE" id="FB4E32DD">
    <property type="entry name" value="Presynaptic clusters and postsynaptic densities"/>
</dbReference>
<dbReference type="ChiTaRS" id="SYT1">
    <property type="organism name" value="human"/>
</dbReference>
<dbReference type="EvolutionaryTrace" id="P21579"/>
<dbReference type="GeneWiki" id="SYT1"/>
<dbReference type="GenomeRNAi" id="6857"/>
<dbReference type="Pharos" id="P21579">
    <property type="development level" value="Tbio"/>
</dbReference>
<dbReference type="PRO" id="PR:P21579"/>
<dbReference type="Proteomes" id="UP000005640">
    <property type="component" value="Chromosome 12"/>
</dbReference>
<dbReference type="RNAct" id="P21579">
    <property type="molecule type" value="protein"/>
</dbReference>
<dbReference type="Bgee" id="ENSG00000067715">
    <property type="expression patterns" value="Expressed in middle temporal gyrus and 153 other cell types or tissues"/>
</dbReference>
<dbReference type="ExpressionAtlas" id="P21579">
    <property type="expression patterns" value="baseline and differential"/>
</dbReference>
<dbReference type="GO" id="GO:0030424">
    <property type="term" value="C:axon"/>
    <property type="evidence" value="ECO:0000318"/>
    <property type="project" value="GO_Central"/>
</dbReference>
<dbReference type="GO" id="GO:0042584">
    <property type="term" value="C:chromaffin granule membrane"/>
    <property type="evidence" value="ECO:0007669"/>
    <property type="project" value="UniProtKB-SubCell"/>
</dbReference>
<dbReference type="GO" id="GO:0030669">
    <property type="term" value="C:clathrin-coated endocytic vesicle membrane"/>
    <property type="evidence" value="ECO:0000304"/>
    <property type="project" value="Reactome"/>
</dbReference>
<dbReference type="GO" id="GO:0060201">
    <property type="term" value="C:clathrin-sculpted acetylcholine transport vesicle membrane"/>
    <property type="evidence" value="ECO:0000304"/>
    <property type="project" value="Reactome"/>
</dbReference>
<dbReference type="GO" id="GO:0061202">
    <property type="term" value="C:clathrin-sculpted gamma-aminobutyric acid transport vesicle membrane"/>
    <property type="evidence" value="ECO:0000304"/>
    <property type="project" value="Reactome"/>
</dbReference>
<dbReference type="GO" id="GO:0060203">
    <property type="term" value="C:clathrin-sculpted glutamate transport vesicle membrane"/>
    <property type="evidence" value="ECO:0000304"/>
    <property type="project" value="Reactome"/>
</dbReference>
<dbReference type="GO" id="GO:0070083">
    <property type="term" value="C:clathrin-sculpted monoamine transport vesicle membrane"/>
    <property type="evidence" value="ECO:0000304"/>
    <property type="project" value="Reactome"/>
</dbReference>
<dbReference type="GO" id="GO:0005737">
    <property type="term" value="C:cytoplasm"/>
    <property type="evidence" value="ECO:0000314"/>
    <property type="project" value="ARUK-UCL"/>
</dbReference>
<dbReference type="GO" id="GO:0031045">
    <property type="term" value="C:dense core granule"/>
    <property type="evidence" value="ECO:0000318"/>
    <property type="project" value="GO_Central"/>
</dbReference>
<dbReference type="GO" id="GO:0060076">
    <property type="term" value="C:excitatory synapse"/>
    <property type="evidence" value="ECO:0007669"/>
    <property type="project" value="Ensembl"/>
</dbReference>
<dbReference type="GO" id="GO:0070382">
    <property type="term" value="C:exocytic vesicle"/>
    <property type="evidence" value="ECO:0000318"/>
    <property type="project" value="GO_Central"/>
</dbReference>
<dbReference type="GO" id="GO:0098978">
    <property type="term" value="C:glutamatergic synapse"/>
    <property type="evidence" value="ECO:0007669"/>
    <property type="project" value="Ensembl"/>
</dbReference>
<dbReference type="GO" id="GO:0005794">
    <property type="term" value="C:Golgi apparatus"/>
    <property type="evidence" value="ECO:0007669"/>
    <property type="project" value="Ensembl"/>
</dbReference>
<dbReference type="GO" id="GO:0098686">
    <property type="term" value="C:hippocampal mossy fiber to CA3 synapse"/>
    <property type="evidence" value="ECO:0007669"/>
    <property type="project" value="Ensembl"/>
</dbReference>
<dbReference type="GO" id="GO:0043005">
    <property type="term" value="C:neuron projection"/>
    <property type="evidence" value="ECO:0000250"/>
    <property type="project" value="ParkinsonsUK-UCL"/>
</dbReference>
<dbReference type="GO" id="GO:0044306">
    <property type="term" value="C:neuron projection terminus"/>
    <property type="evidence" value="ECO:0007669"/>
    <property type="project" value="Ensembl"/>
</dbReference>
<dbReference type="GO" id="GO:0005886">
    <property type="term" value="C:plasma membrane"/>
    <property type="evidence" value="ECO:0000318"/>
    <property type="project" value="GO_Central"/>
</dbReference>
<dbReference type="GO" id="GO:0099524">
    <property type="term" value="C:postsynaptic cytosol"/>
    <property type="evidence" value="ECO:0007669"/>
    <property type="project" value="Ensembl"/>
</dbReference>
<dbReference type="GO" id="GO:0014069">
    <property type="term" value="C:postsynaptic density"/>
    <property type="evidence" value="ECO:0007669"/>
    <property type="project" value="Ensembl"/>
</dbReference>
<dbReference type="GO" id="GO:0045211">
    <property type="term" value="C:postsynaptic membrane"/>
    <property type="evidence" value="ECO:0007669"/>
    <property type="project" value="Ensembl"/>
</dbReference>
<dbReference type="GO" id="GO:0048786">
    <property type="term" value="C:presynaptic active zone"/>
    <property type="evidence" value="ECO:0007669"/>
    <property type="project" value="Ensembl"/>
</dbReference>
<dbReference type="GO" id="GO:0099523">
    <property type="term" value="C:presynaptic cytosol"/>
    <property type="evidence" value="ECO:0007669"/>
    <property type="project" value="Ensembl"/>
</dbReference>
<dbReference type="GO" id="GO:0042734">
    <property type="term" value="C:presynaptic membrane"/>
    <property type="evidence" value="ECO:0007669"/>
    <property type="project" value="Ensembl"/>
</dbReference>
<dbReference type="GO" id="GO:0008021">
    <property type="term" value="C:synaptic vesicle"/>
    <property type="evidence" value="ECO:0000304"/>
    <property type="project" value="UniProtKB"/>
</dbReference>
<dbReference type="GO" id="GO:0030672">
    <property type="term" value="C:synaptic vesicle membrane"/>
    <property type="evidence" value="ECO:0000318"/>
    <property type="project" value="GO_Central"/>
</dbReference>
<dbReference type="GO" id="GO:0005509">
    <property type="term" value="F:calcium ion binding"/>
    <property type="evidence" value="ECO:0007669"/>
    <property type="project" value="Ensembl"/>
</dbReference>
<dbReference type="GO" id="GO:0061891">
    <property type="term" value="F:calcium ion sensor activity"/>
    <property type="evidence" value="ECO:0000318"/>
    <property type="project" value="GO_Central"/>
</dbReference>
<dbReference type="GO" id="GO:0005544">
    <property type="term" value="F:calcium-dependent phospholipid binding"/>
    <property type="evidence" value="ECO:0000250"/>
    <property type="project" value="ParkinsonsUK-UCL"/>
</dbReference>
<dbReference type="GO" id="GO:0048306">
    <property type="term" value="F:calcium-dependent protein binding"/>
    <property type="evidence" value="ECO:0007669"/>
    <property type="project" value="Ensembl"/>
</dbReference>
<dbReference type="GO" id="GO:0005516">
    <property type="term" value="F:calmodulin binding"/>
    <property type="evidence" value="ECO:0007669"/>
    <property type="project" value="Ensembl"/>
</dbReference>
<dbReference type="GO" id="GO:0030276">
    <property type="term" value="F:clathrin binding"/>
    <property type="evidence" value="ECO:0007669"/>
    <property type="project" value="Ensembl"/>
</dbReference>
<dbReference type="GO" id="GO:0042802">
    <property type="term" value="F:identical protein binding"/>
    <property type="evidence" value="ECO:0007669"/>
    <property type="project" value="Ensembl"/>
</dbReference>
<dbReference type="GO" id="GO:0008289">
    <property type="term" value="F:lipid binding"/>
    <property type="evidence" value="ECO:0000314"/>
    <property type="project" value="DisProt"/>
</dbReference>
<dbReference type="GO" id="GO:0050750">
    <property type="term" value="F:low-density lipoprotein particle receptor binding"/>
    <property type="evidence" value="ECO:0000314"/>
    <property type="project" value="MGI"/>
</dbReference>
<dbReference type="GO" id="GO:0140693">
    <property type="term" value="F:molecular condensate scaffold activity"/>
    <property type="evidence" value="ECO:0007669"/>
    <property type="project" value="Ensembl"/>
</dbReference>
<dbReference type="GO" id="GO:0005546">
    <property type="term" value="F:phosphatidylinositol-4,5-bisphosphate binding"/>
    <property type="evidence" value="ECO:0007669"/>
    <property type="project" value="Ensembl"/>
</dbReference>
<dbReference type="GO" id="GO:0001786">
    <property type="term" value="F:phosphatidylserine binding"/>
    <property type="evidence" value="ECO:0007669"/>
    <property type="project" value="Ensembl"/>
</dbReference>
<dbReference type="GO" id="GO:0046982">
    <property type="term" value="F:protein heterodimerization activity"/>
    <property type="evidence" value="ECO:0007669"/>
    <property type="project" value="Ensembl"/>
</dbReference>
<dbReference type="GO" id="GO:0000149">
    <property type="term" value="F:SNARE binding"/>
    <property type="evidence" value="ECO:0000250"/>
    <property type="project" value="ParkinsonsUK-UCL"/>
</dbReference>
<dbReference type="GO" id="GO:0017075">
    <property type="term" value="F:syntaxin-1 binding"/>
    <property type="evidence" value="ECO:0000250"/>
    <property type="project" value="ParkinsonsUK-UCL"/>
</dbReference>
<dbReference type="GO" id="GO:0030348">
    <property type="term" value="F:syntaxin-3 binding"/>
    <property type="evidence" value="ECO:0007669"/>
    <property type="project" value="Ensembl"/>
</dbReference>
<dbReference type="GO" id="GO:0099502">
    <property type="term" value="P:calcium-dependent activation of synaptic vesicle fusion"/>
    <property type="evidence" value="ECO:0000318"/>
    <property type="project" value="GO_Central"/>
</dbReference>
<dbReference type="GO" id="GO:0030154">
    <property type="term" value="P:cell differentiation"/>
    <property type="evidence" value="ECO:0007669"/>
    <property type="project" value="UniProtKB-KW"/>
</dbReference>
<dbReference type="GO" id="GO:0071277">
    <property type="term" value="P:cellular response to calcium ion"/>
    <property type="evidence" value="ECO:0000250"/>
    <property type="project" value="ParkinsonsUK-UCL"/>
</dbReference>
<dbReference type="GO" id="GO:0007268">
    <property type="term" value="P:chemical synaptic transmission"/>
    <property type="evidence" value="ECO:0000304"/>
    <property type="project" value="ProtInc"/>
</dbReference>
<dbReference type="GO" id="GO:0005513">
    <property type="term" value="P:detection of calcium ion"/>
    <property type="evidence" value="ECO:0000304"/>
    <property type="project" value="UniProtKB"/>
</dbReference>
<dbReference type="GO" id="GO:0098746">
    <property type="term" value="P:fast, calcium ion-dependent exocytosis of neurotransmitter"/>
    <property type="evidence" value="ECO:0000250"/>
    <property type="project" value="ParkinsonsUK-UCL"/>
</dbReference>
<dbReference type="GO" id="GO:0140694">
    <property type="term" value="P:membraneless organelle assembly"/>
    <property type="evidence" value="ECO:0007669"/>
    <property type="project" value="Ensembl"/>
</dbReference>
<dbReference type="GO" id="GO:0007269">
    <property type="term" value="P:neurotransmitter secretion"/>
    <property type="evidence" value="ECO:0000304"/>
    <property type="project" value="UniProtKB"/>
</dbReference>
<dbReference type="GO" id="GO:1903235">
    <property type="term" value="P:positive regulation of calcium ion-dependent exocytosis of neurotransmitter"/>
    <property type="evidence" value="ECO:0000250"/>
    <property type="project" value="UniProtKB"/>
</dbReference>
<dbReference type="GO" id="GO:1903861">
    <property type="term" value="P:positive regulation of dendrite extension"/>
    <property type="evidence" value="ECO:0000314"/>
    <property type="project" value="UniProtKB"/>
</dbReference>
<dbReference type="GO" id="GO:0033603">
    <property type="term" value="P:positive regulation of dopamine secretion"/>
    <property type="evidence" value="ECO:0007669"/>
    <property type="project" value="Ensembl"/>
</dbReference>
<dbReference type="GO" id="GO:0050806">
    <property type="term" value="P:positive regulation of synaptic transmission"/>
    <property type="evidence" value="ECO:0000250"/>
    <property type="project" value="ParkinsonsUK-UCL"/>
</dbReference>
<dbReference type="GO" id="GO:0051291">
    <property type="term" value="P:protein heterooligomerization"/>
    <property type="evidence" value="ECO:0007669"/>
    <property type="project" value="Ensembl"/>
</dbReference>
<dbReference type="GO" id="GO:0017158">
    <property type="term" value="P:regulation of calcium ion-dependent exocytosis"/>
    <property type="evidence" value="ECO:0000318"/>
    <property type="project" value="GO_Central"/>
</dbReference>
<dbReference type="GO" id="GO:0017157">
    <property type="term" value="P:regulation of exocytosis"/>
    <property type="evidence" value="ECO:0000304"/>
    <property type="project" value="UniProtKB"/>
</dbReference>
<dbReference type="GO" id="GO:1903305">
    <property type="term" value="P:regulation of regulated secretory pathway"/>
    <property type="evidence" value="ECO:0000250"/>
    <property type="project" value="ParkinsonsUK-UCL"/>
</dbReference>
<dbReference type="GO" id="GO:0051966">
    <property type="term" value="P:regulation of synaptic transmission, glutamatergic"/>
    <property type="evidence" value="ECO:0000250"/>
    <property type="project" value="ParkinsonsUK-UCL"/>
</dbReference>
<dbReference type="GO" id="GO:2000300">
    <property type="term" value="P:regulation of synaptic vesicle exocytosis"/>
    <property type="evidence" value="ECO:0000318"/>
    <property type="project" value="GO_Central"/>
</dbReference>
<dbReference type="GO" id="GO:0061669">
    <property type="term" value="P:spontaneous neurotransmitter secretion"/>
    <property type="evidence" value="ECO:0007669"/>
    <property type="project" value="Ensembl"/>
</dbReference>
<dbReference type="GO" id="GO:0071911">
    <property type="term" value="P:synchronous neurotransmitter secretion"/>
    <property type="evidence" value="ECO:0007669"/>
    <property type="project" value="Ensembl"/>
</dbReference>
<dbReference type="GO" id="GO:0048278">
    <property type="term" value="P:vesicle docking"/>
    <property type="evidence" value="ECO:0007669"/>
    <property type="project" value="Ensembl"/>
</dbReference>
<dbReference type="GO" id="GO:0006906">
    <property type="term" value="P:vesicle fusion"/>
    <property type="evidence" value="ECO:0007669"/>
    <property type="project" value="Ensembl"/>
</dbReference>
<dbReference type="GO" id="GO:0016050">
    <property type="term" value="P:vesicle organization"/>
    <property type="evidence" value="ECO:0000314"/>
    <property type="project" value="DisProt"/>
</dbReference>
<dbReference type="GO" id="GO:0016192">
    <property type="term" value="P:vesicle-mediated transport"/>
    <property type="evidence" value="ECO:0000318"/>
    <property type="project" value="GO_Central"/>
</dbReference>
<dbReference type="CDD" id="cd08385">
    <property type="entry name" value="C2A_Synaptotagmin-1-5-6-9-10"/>
    <property type="match status" value="1"/>
</dbReference>
<dbReference type="CDD" id="cd08402">
    <property type="entry name" value="C2B_Synaptotagmin-1"/>
    <property type="match status" value="1"/>
</dbReference>
<dbReference type="CDD" id="cd21963">
    <property type="entry name" value="Syt1_N"/>
    <property type="match status" value="1"/>
</dbReference>
<dbReference type="FunFam" id="2.60.40.150:FF:000007">
    <property type="entry name" value="Synaptotagmin 1"/>
    <property type="match status" value="1"/>
</dbReference>
<dbReference type="FunFam" id="2.60.40.150:FF:000016">
    <property type="entry name" value="Synaptotagmin 1"/>
    <property type="match status" value="1"/>
</dbReference>
<dbReference type="Gene3D" id="2.60.40.150">
    <property type="entry name" value="C2 domain"/>
    <property type="match status" value="2"/>
</dbReference>
<dbReference type="InterPro" id="IPR000008">
    <property type="entry name" value="C2_dom"/>
</dbReference>
<dbReference type="InterPro" id="IPR035892">
    <property type="entry name" value="C2_domain_sf"/>
</dbReference>
<dbReference type="InterPro" id="IPR001565">
    <property type="entry name" value="Synaptotagmin"/>
</dbReference>
<dbReference type="PANTHER" id="PTHR10024">
    <property type="entry name" value="SYNAPTOTAGMIN"/>
    <property type="match status" value="1"/>
</dbReference>
<dbReference type="PANTHER" id="PTHR10024:SF239">
    <property type="entry name" value="SYNAPTOTAGMIN-1"/>
    <property type="match status" value="1"/>
</dbReference>
<dbReference type="Pfam" id="PF00168">
    <property type="entry name" value="C2"/>
    <property type="match status" value="2"/>
</dbReference>
<dbReference type="PRINTS" id="PR00360">
    <property type="entry name" value="C2DOMAIN"/>
</dbReference>
<dbReference type="PRINTS" id="PR00399">
    <property type="entry name" value="SYNAPTOTAGMN"/>
</dbReference>
<dbReference type="SMART" id="SM00239">
    <property type="entry name" value="C2"/>
    <property type="match status" value="2"/>
</dbReference>
<dbReference type="SUPFAM" id="SSF49562">
    <property type="entry name" value="C2 domain (Calcium/lipid-binding domain, CaLB)"/>
    <property type="match status" value="2"/>
</dbReference>
<dbReference type="PROSITE" id="PS50004">
    <property type="entry name" value="C2"/>
    <property type="match status" value="2"/>
</dbReference>
<evidence type="ECO:0000250" key="1">
    <source>
        <dbReference type="UniProtKB" id="P21707"/>
    </source>
</evidence>
<evidence type="ECO:0000250" key="2">
    <source>
        <dbReference type="UniProtKB" id="P46096"/>
    </source>
</evidence>
<evidence type="ECO:0000250" key="3">
    <source>
        <dbReference type="UniProtKB" id="P48018"/>
    </source>
</evidence>
<evidence type="ECO:0000255" key="4"/>
<evidence type="ECO:0000255" key="5">
    <source>
        <dbReference type="PROSITE-ProRule" id="PRU00041"/>
    </source>
</evidence>
<evidence type="ECO:0000256" key="6">
    <source>
        <dbReference type="SAM" id="MobiDB-lite"/>
    </source>
</evidence>
<evidence type="ECO:0000269" key="7">
    <source>
    </source>
</evidence>
<evidence type="ECO:0000269" key="8">
    <source>
    </source>
</evidence>
<evidence type="ECO:0000269" key="9">
    <source>
    </source>
</evidence>
<evidence type="ECO:0000269" key="10">
    <source>
    </source>
</evidence>
<evidence type="ECO:0000269" key="11">
    <source>
    </source>
</evidence>
<evidence type="ECO:0000269" key="12">
    <source>
    </source>
</evidence>
<evidence type="ECO:0000303" key="13">
    <source>
    </source>
</evidence>
<evidence type="ECO:0000305" key="14"/>
<evidence type="ECO:0000312" key="15">
    <source>
        <dbReference type="HGNC" id="HGNC:11509"/>
    </source>
</evidence>
<evidence type="ECO:0007744" key="16">
    <source>
    </source>
</evidence>
<evidence type="ECO:0007829" key="17">
    <source>
        <dbReference type="PDB" id="2LHA"/>
    </source>
</evidence>
<evidence type="ECO:0007829" key="18">
    <source>
        <dbReference type="PDB" id="3F04"/>
    </source>
</evidence>
<evidence type="ECO:0007829" key="19">
    <source>
        <dbReference type="PDB" id="6QNS"/>
    </source>
</evidence>
<evidence type="ECO:0007829" key="20">
    <source>
        <dbReference type="PDB" id="6TZ3"/>
    </source>
</evidence>
<evidence type="ECO:0007829" key="21">
    <source>
        <dbReference type="PDB" id="6U41"/>
    </source>
</evidence>
<evidence type="ECO:0007829" key="22">
    <source>
        <dbReference type="PDB" id="7U4Q"/>
    </source>
</evidence>